<dbReference type="EC" id="2.7.1.30" evidence="1"/>
<dbReference type="EMBL" id="BA000040">
    <property type="protein sequence ID" value="BAC46675.1"/>
    <property type="molecule type" value="Genomic_DNA"/>
</dbReference>
<dbReference type="RefSeq" id="NP_768050.1">
    <property type="nucleotide sequence ID" value="NC_004463.1"/>
</dbReference>
<dbReference type="RefSeq" id="WP_011084227.1">
    <property type="nucleotide sequence ID" value="NC_004463.1"/>
</dbReference>
<dbReference type="SMR" id="Q89UK6"/>
<dbReference type="FunCoup" id="Q89UK6">
    <property type="interactions" value="602"/>
</dbReference>
<dbReference type="STRING" id="224911.AAV28_03990"/>
<dbReference type="EnsemblBacteria" id="BAC46675">
    <property type="protein sequence ID" value="BAC46675"/>
    <property type="gene ID" value="BAC46675"/>
</dbReference>
<dbReference type="GeneID" id="46488685"/>
<dbReference type="KEGG" id="bja:blr1410"/>
<dbReference type="PATRIC" id="fig|224911.44.peg.836"/>
<dbReference type="eggNOG" id="COG0554">
    <property type="taxonomic scope" value="Bacteria"/>
</dbReference>
<dbReference type="HOGENOM" id="CLU_009281_2_3_5"/>
<dbReference type="InParanoid" id="Q89UK6"/>
<dbReference type="OrthoDB" id="9805576at2"/>
<dbReference type="PhylomeDB" id="Q89UK6"/>
<dbReference type="UniPathway" id="UPA00618">
    <property type="reaction ID" value="UER00672"/>
</dbReference>
<dbReference type="Proteomes" id="UP000002526">
    <property type="component" value="Chromosome"/>
</dbReference>
<dbReference type="GO" id="GO:0005829">
    <property type="term" value="C:cytosol"/>
    <property type="evidence" value="ECO:0000318"/>
    <property type="project" value="GO_Central"/>
</dbReference>
<dbReference type="GO" id="GO:0005524">
    <property type="term" value="F:ATP binding"/>
    <property type="evidence" value="ECO:0007669"/>
    <property type="project" value="UniProtKB-UniRule"/>
</dbReference>
<dbReference type="GO" id="GO:0004370">
    <property type="term" value="F:glycerol kinase activity"/>
    <property type="evidence" value="ECO:0000250"/>
    <property type="project" value="UniProtKB"/>
</dbReference>
<dbReference type="GO" id="GO:0019563">
    <property type="term" value="P:glycerol catabolic process"/>
    <property type="evidence" value="ECO:0000318"/>
    <property type="project" value="GO_Central"/>
</dbReference>
<dbReference type="GO" id="GO:0006071">
    <property type="term" value="P:glycerol metabolic process"/>
    <property type="evidence" value="ECO:0000250"/>
    <property type="project" value="UniProtKB"/>
</dbReference>
<dbReference type="GO" id="GO:0006072">
    <property type="term" value="P:glycerol-3-phosphate metabolic process"/>
    <property type="evidence" value="ECO:0007669"/>
    <property type="project" value="InterPro"/>
</dbReference>
<dbReference type="CDD" id="cd07786">
    <property type="entry name" value="FGGY_EcGK_like"/>
    <property type="match status" value="1"/>
</dbReference>
<dbReference type="FunFam" id="3.30.420.40:FF:000007">
    <property type="entry name" value="Glycerol kinase"/>
    <property type="match status" value="1"/>
</dbReference>
<dbReference type="FunFam" id="3.30.420.40:FF:000008">
    <property type="entry name" value="Glycerol kinase"/>
    <property type="match status" value="1"/>
</dbReference>
<dbReference type="Gene3D" id="3.30.420.40">
    <property type="match status" value="2"/>
</dbReference>
<dbReference type="HAMAP" id="MF_00186">
    <property type="entry name" value="Glycerol_kin"/>
    <property type="match status" value="1"/>
</dbReference>
<dbReference type="InterPro" id="IPR043129">
    <property type="entry name" value="ATPase_NBD"/>
</dbReference>
<dbReference type="InterPro" id="IPR000577">
    <property type="entry name" value="Carb_kinase_FGGY"/>
</dbReference>
<dbReference type="InterPro" id="IPR018483">
    <property type="entry name" value="Carb_kinase_FGGY_CS"/>
</dbReference>
<dbReference type="InterPro" id="IPR018485">
    <property type="entry name" value="FGGY_C"/>
</dbReference>
<dbReference type="InterPro" id="IPR018484">
    <property type="entry name" value="FGGY_N"/>
</dbReference>
<dbReference type="InterPro" id="IPR005999">
    <property type="entry name" value="Glycerol_kin"/>
</dbReference>
<dbReference type="NCBIfam" id="TIGR01311">
    <property type="entry name" value="glycerol_kin"/>
    <property type="match status" value="1"/>
</dbReference>
<dbReference type="NCBIfam" id="NF000756">
    <property type="entry name" value="PRK00047.1"/>
    <property type="match status" value="1"/>
</dbReference>
<dbReference type="PANTHER" id="PTHR10196:SF78">
    <property type="entry name" value="GLYCEROL KINASE"/>
    <property type="match status" value="1"/>
</dbReference>
<dbReference type="PANTHER" id="PTHR10196">
    <property type="entry name" value="SUGAR KINASE"/>
    <property type="match status" value="1"/>
</dbReference>
<dbReference type="Pfam" id="PF02782">
    <property type="entry name" value="FGGY_C"/>
    <property type="match status" value="1"/>
</dbReference>
<dbReference type="Pfam" id="PF00370">
    <property type="entry name" value="FGGY_N"/>
    <property type="match status" value="1"/>
</dbReference>
<dbReference type="PIRSF" id="PIRSF000538">
    <property type="entry name" value="GlpK"/>
    <property type="match status" value="1"/>
</dbReference>
<dbReference type="SUPFAM" id="SSF53067">
    <property type="entry name" value="Actin-like ATPase domain"/>
    <property type="match status" value="2"/>
</dbReference>
<dbReference type="PROSITE" id="PS00933">
    <property type="entry name" value="FGGY_KINASES_1"/>
    <property type="match status" value="1"/>
</dbReference>
<dbReference type="PROSITE" id="PS00445">
    <property type="entry name" value="FGGY_KINASES_2"/>
    <property type="match status" value="1"/>
</dbReference>
<proteinExistence type="inferred from homology"/>
<name>GLPK_BRADU</name>
<gene>
    <name evidence="1" type="primary">glpK</name>
    <name type="ordered locus">blr1410</name>
</gene>
<organism>
    <name type="scientific">Bradyrhizobium diazoefficiens (strain JCM 10833 / BCRC 13528 / IAM 13628 / NBRC 14792 / USDA 110)</name>
    <dbReference type="NCBI Taxonomy" id="224911"/>
    <lineage>
        <taxon>Bacteria</taxon>
        <taxon>Pseudomonadati</taxon>
        <taxon>Pseudomonadota</taxon>
        <taxon>Alphaproteobacteria</taxon>
        <taxon>Hyphomicrobiales</taxon>
        <taxon>Nitrobacteraceae</taxon>
        <taxon>Bradyrhizobium</taxon>
    </lineage>
</organism>
<protein>
    <recommendedName>
        <fullName evidence="1">Glycerol kinase</fullName>
        <ecNumber evidence="1">2.7.1.30</ecNumber>
    </recommendedName>
    <alternativeName>
        <fullName evidence="1">ATP:glycerol 3-phosphotransferase</fullName>
    </alternativeName>
    <alternativeName>
        <fullName evidence="1">Glycerokinase</fullName>
        <shortName evidence="1">GK</shortName>
    </alternativeName>
</protein>
<reference key="1">
    <citation type="journal article" date="2002" name="DNA Res.">
        <title>Complete genomic sequence of nitrogen-fixing symbiotic bacterium Bradyrhizobium japonicum USDA110.</title>
        <authorList>
            <person name="Kaneko T."/>
            <person name="Nakamura Y."/>
            <person name="Sato S."/>
            <person name="Minamisawa K."/>
            <person name="Uchiumi T."/>
            <person name="Sasamoto S."/>
            <person name="Watanabe A."/>
            <person name="Idesawa K."/>
            <person name="Iriguchi M."/>
            <person name="Kawashima K."/>
            <person name="Kohara M."/>
            <person name="Matsumoto M."/>
            <person name="Shimpo S."/>
            <person name="Tsuruoka H."/>
            <person name="Wada T."/>
            <person name="Yamada M."/>
            <person name="Tabata S."/>
        </authorList>
    </citation>
    <scope>NUCLEOTIDE SEQUENCE [LARGE SCALE GENOMIC DNA]</scope>
    <source>
        <strain>JCM 10833 / BCRC 13528 / IAM 13628 / NBRC 14792 / USDA 110</strain>
    </source>
</reference>
<comment type="function">
    <text evidence="1">Key enzyme in the regulation of glycerol uptake and metabolism. Catalyzes the phosphorylation of glycerol to yield sn-glycerol 3-phosphate.</text>
</comment>
<comment type="catalytic activity">
    <reaction evidence="1">
        <text>glycerol + ATP = sn-glycerol 3-phosphate + ADP + H(+)</text>
        <dbReference type="Rhea" id="RHEA:21644"/>
        <dbReference type="ChEBI" id="CHEBI:15378"/>
        <dbReference type="ChEBI" id="CHEBI:17754"/>
        <dbReference type="ChEBI" id="CHEBI:30616"/>
        <dbReference type="ChEBI" id="CHEBI:57597"/>
        <dbReference type="ChEBI" id="CHEBI:456216"/>
        <dbReference type="EC" id="2.7.1.30"/>
    </reaction>
</comment>
<comment type="activity regulation">
    <text evidence="1">Inhibited by fructose 1,6-bisphosphate (FBP).</text>
</comment>
<comment type="pathway">
    <text evidence="1">Polyol metabolism; glycerol degradation via glycerol kinase pathway; sn-glycerol 3-phosphate from glycerol: step 1/1.</text>
</comment>
<comment type="similarity">
    <text evidence="1">Belongs to the FGGY kinase family.</text>
</comment>
<keyword id="KW-0067">ATP-binding</keyword>
<keyword id="KW-0319">Glycerol metabolism</keyword>
<keyword id="KW-0418">Kinase</keyword>
<keyword id="KW-0547">Nucleotide-binding</keyword>
<keyword id="KW-1185">Reference proteome</keyword>
<keyword id="KW-0808">Transferase</keyword>
<feature type="chain" id="PRO_0000059439" description="Glycerol kinase">
    <location>
        <begin position="1"/>
        <end position="500"/>
    </location>
</feature>
<feature type="binding site" evidence="1">
    <location>
        <position position="11"/>
    </location>
    <ligand>
        <name>ADP</name>
        <dbReference type="ChEBI" id="CHEBI:456216"/>
    </ligand>
</feature>
<feature type="binding site" evidence="1">
    <location>
        <position position="11"/>
    </location>
    <ligand>
        <name>ATP</name>
        <dbReference type="ChEBI" id="CHEBI:30616"/>
    </ligand>
</feature>
<feature type="binding site" evidence="1">
    <location>
        <position position="11"/>
    </location>
    <ligand>
        <name>sn-glycerol 3-phosphate</name>
        <dbReference type="ChEBI" id="CHEBI:57597"/>
    </ligand>
</feature>
<feature type="binding site" evidence="1">
    <location>
        <position position="12"/>
    </location>
    <ligand>
        <name>ATP</name>
        <dbReference type="ChEBI" id="CHEBI:30616"/>
    </ligand>
</feature>
<feature type="binding site" evidence="1">
    <location>
        <position position="13"/>
    </location>
    <ligand>
        <name>ATP</name>
        <dbReference type="ChEBI" id="CHEBI:30616"/>
    </ligand>
</feature>
<feature type="binding site" evidence="1">
    <location>
        <position position="15"/>
    </location>
    <ligand>
        <name>ADP</name>
        <dbReference type="ChEBI" id="CHEBI:456216"/>
    </ligand>
</feature>
<feature type="binding site" evidence="1">
    <location>
        <position position="81"/>
    </location>
    <ligand>
        <name>glycerol</name>
        <dbReference type="ChEBI" id="CHEBI:17754"/>
    </ligand>
</feature>
<feature type="binding site" evidence="1">
    <location>
        <position position="81"/>
    </location>
    <ligand>
        <name>sn-glycerol 3-phosphate</name>
        <dbReference type="ChEBI" id="CHEBI:57597"/>
    </ligand>
</feature>
<feature type="binding site" evidence="1">
    <location>
        <position position="82"/>
    </location>
    <ligand>
        <name>glycerol</name>
        <dbReference type="ChEBI" id="CHEBI:17754"/>
    </ligand>
</feature>
<feature type="binding site" evidence="1">
    <location>
        <position position="82"/>
    </location>
    <ligand>
        <name>sn-glycerol 3-phosphate</name>
        <dbReference type="ChEBI" id="CHEBI:57597"/>
    </ligand>
</feature>
<feature type="binding site" evidence="1">
    <location>
        <position position="133"/>
    </location>
    <ligand>
        <name>glycerol</name>
        <dbReference type="ChEBI" id="CHEBI:17754"/>
    </ligand>
</feature>
<feature type="binding site" evidence="1">
    <location>
        <position position="133"/>
    </location>
    <ligand>
        <name>sn-glycerol 3-phosphate</name>
        <dbReference type="ChEBI" id="CHEBI:57597"/>
    </ligand>
</feature>
<feature type="binding site" evidence="1">
    <location>
        <position position="242"/>
    </location>
    <ligand>
        <name>glycerol</name>
        <dbReference type="ChEBI" id="CHEBI:17754"/>
    </ligand>
</feature>
<feature type="binding site" evidence="1">
    <location>
        <position position="242"/>
    </location>
    <ligand>
        <name>sn-glycerol 3-phosphate</name>
        <dbReference type="ChEBI" id="CHEBI:57597"/>
    </ligand>
</feature>
<feature type="binding site" evidence="1">
    <location>
        <position position="243"/>
    </location>
    <ligand>
        <name>glycerol</name>
        <dbReference type="ChEBI" id="CHEBI:17754"/>
    </ligand>
</feature>
<feature type="binding site" evidence="1">
    <location>
        <position position="264"/>
    </location>
    <ligand>
        <name>ADP</name>
        <dbReference type="ChEBI" id="CHEBI:456216"/>
    </ligand>
</feature>
<feature type="binding site" evidence="1">
    <location>
        <position position="264"/>
    </location>
    <ligand>
        <name>ATP</name>
        <dbReference type="ChEBI" id="CHEBI:30616"/>
    </ligand>
</feature>
<feature type="binding site" evidence="1">
    <location>
        <position position="307"/>
    </location>
    <ligand>
        <name>ADP</name>
        <dbReference type="ChEBI" id="CHEBI:456216"/>
    </ligand>
</feature>
<feature type="binding site" evidence="1">
    <location>
        <position position="307"/>
    </location>
    <ligand>
        <name>ATP</name>
        <dbReference type="ChEBI" id="CHEBI:30616"/>
    </ligand>
</feature>
<feature type="binding site" evidence="1">
    <location>
        <position position="311"/>
    </location>
    <ligand>
        <name>ATP</name>
        <dbReference type="ChEBI" id="CHEBI:30616"/>
    </ligand>
</feature>
<feature type="binding site" evidence="1">
    <location>
        <position position="411"/>
    </location>
    <ligand>
        <name>ADP</name>
        <dbReference type="ChEBI" id="CHEBI:456216"/>
    </ligand>
</feature>
<feature type="binding site" evidence="1">
    <location>
        <position position="411"/>
    </location>
    <ligand>
        <name>ATP</name>
        <dbReference type="ChEBI" id="CHEBI:30616"/>
    </ligand>
</feature>
<sequence>MSFVLAIDQGTTSSRAIVFRSDISIAARAQAEFPQHFPASGWVEHEPEDIWTSTVMVCRDAIAQAGISAKDIAAIGITNQRETTVVWDRATGQAVHRAIVWQDRRTADICAKLKADGREPVISEKTGLIIDPYFSGTKVAWILDHVPGARARAARGELMFGTVDCYLLWRLTGGKVHATDATNASRTLLFNIHTGQWDDELLEIIGVPRSMLPEVKDSSARFGESVPDLFGGAIAISGIAGDQQAATIGQACFRPGMMKSTYGTGCFALLNTGTTPVVSKNKLLTTVAYQLDGKRTYALEGSIFVAGSAVQWLRDGLGIIKHAAETGPLADQSDSMQSVYLVPAFVGMGAPYWNPRVRGALFGLTRNTGPAELAHAALESVCYQTFDLWAAMRADWPSSETASVVLRVDGGMTASDWTMQRLADLLDAPVDRPVIQETTALGAAYLAGLNAGVYPEPTKFADNWRLEHRFKPNMSEATRERKLAGWARAVKGVLASDEGA</sequence>
<evidence type="ECO:0000255" key="1">
    <source>
        <dbReference type="HAMAP-Rule" id="MF_00186"/>
    </source>
</evidence>
<accession>Q89UK6</accession>